<proteinExistence type="inferred from homology"/>
<feature type="chain" id="PRO_1000142147" description="Large ribosomal subunit protein uL4">
    <location>
        <begin position="1"/>
        <end position="252"/>
    </location>
</feature>
<comment type="function">
    <text evidence="1">One of the primary rRNA binding proteins, this protein initially binds near the 5'-end of the 23S rRNA. It is important during the early stages of 50S assembly. It makes multiple contacts with different domains of the 23S rRNA in the assembled 50S subunit and ribosome.</text>
</comment>
<comment type="function">
    <text evidence="1">Forms part of the polypeptide exit tunnel.</text>
</comment>
<comment type="subunit">
    <text evidence="1">Part of the 50S ribosomal subunit.</text>
</comment>
<comment type="similarity">
    <text evidence="1">Belongs to the universal ribosomal protein uL4 family.</text>
</comment>
<name>RL4_META3</name>
<evidence type="ECO:0000255" key="1">
    <source>
        <dbReference type="HAMAP-Rule" id="MF_01328"/>
    </source>
</evidence>
<evidence type="ECO:0000305" key="2"/>
<protein>
    <recommendedName>
        <fullName evidence="1">Large ribosomal subunit protein uL4</fullName>
    </recommendedName>
    <alternativeName>
        <fullName evidence="2">50S ribosomal protein L4</fullName>
    </alternativeName>
</protein>
<keyword id="KW-0687">Ribonucleoprotein</keyword>
<keyword id="KW-0689">Ribosomal protein</keyword>
<keyword id="KW-0694">RNA-binding</keyword>
<keyword id="KW-0699">rRNA-binding</keyword>
<dbReference type="EMBL" id="CP000743">
    <property type="protein sequence ID" value="ABR56389.1"/>
    <property type="molecule type" value="Genomic_DNA"/>
</dbReference>
<dbReference type="RefSeq" id="WP_011973521.1">
    <property type="nucleotide sequence ID" value="NC_009635.1"/>
</dbReference>
<dbReference type="SMR" id="A6UV67"/>
<dbReference type="STRING" id="419665.Maeo_0806"/>
<dbReference type="GeneID" id="5326662"/>
<dbReference type="KEGG" id="mae:Maeo_0806"/>
<dbReference type="eggNOG" id="arCOG04071">
    <property type="taxonomic scope" value="Archaea"/>
</dbReference>
<dbReference type="HOGENOM" id="CLU_026535_0_0_2"/>
<dbReference type="OrthoDB" id="10737at2157"/>
<dbReference type="Proteomes" id="UP000001106">
    <property type="component" value="Chromosome"/>
</dbReference>
<dbReference type="GO" id="GO:1990904">
    <property type="term" value="C:ribonucleoprotein complex"/>
    <property type="evidence" value="ECO:0007669"/>
    <property type="project" value="UniProtKB-KW"/>
</dbReference>
<dbReference type="GO" id="GO:0005840">
    <property type="term" value="C:ribosome"/>
    <property type="evidence" value="ECO:0007669"/>
    <property type="project" value="UniProtKB-KW"/>
</dbReference>
<dbReference type="GO" id="GO:0019843">
    <property type="term" value="F:rRNA binding"/>
    <property type="evidence" value="ECO:0007669"/>
    <property type="project" value="UniProtKB-UniRule"/>
</dbReference>
<dbReference type="GO" id="GO:0003735">
    <property type="term" value="F:structural constituent of ribosome"/>
    <property type="evidence" value="ECO:0007669"/>
    <property type="project" value="InterPro"/>
</dbReference>
<dbReference type="GO" id="GO:0006412">
    <property type="term" value="P:translation"/>
    <property type="evidence" value="ECO:0007669"/>
    <property type="project" value="UniProtKB-UniRule"/>
</dbReference>
<dbReference type="Gene3D" id="3.40.1370.10">
    <property type="match status" value="1"/>
</dbReference>
<dbReference type="HAMAP" id="MF_01328_A">
    <property type="entry name" value="Ribosomal_uL4_A"/>
    <property type="match status" value="1"/>
</dbReference>
<dbReference type="InterPro" id="IPR002136">
    <property type="entry name" value="Ribosomal_uL4"/>
</dbReference>
<dbReference type="InterPro" id="IPR023574">
    <property type="entry name" value="Ribosomal_uL4_dom_sf"/>
</dbReference>
<dbReference type="InterPro" id="IPR013000">
    <property type="entry name" value="Ribosomal_uL4_euk/arc_CS"/>
</dbReference>
<dbReference type="InterPro" id="IPR045240">
    <property type="entry name" value="Ribosomal_uL4_euk/arch"/>
</dbReference>
<dbReference type="InterPro" id="IPR019970">
    <property type="entry name" value="Ribosomall_uL4-arc"/>
</dbReference>
<dbReference type="NCBIfam" id="TIGR03672">
    <property type="entry name" value="rpl4p_arch"/>
    <property type="match status" value="1"/>
</dbReference>
<dbReference type="PANTHER" id="PTHR19431">
    <property type="entry name" value="60S RIBOSOMAL PROTEIN L4"/>
    <property type="match status" value="1"/>
</dbReference>
<dbReference type="Pfam" id="PF00573">
    <property type="entry name" value="Ribosomal_L4"/>
    <property type="match status" value="1"/>
</dbReference>
<dbReference type="SUPFAM" id="SSF52166">
    <property type="entry name" value="Ribosomal protein L4"/>
    <property type="match status" value="1"/>
</dbReference>
<dbReference type="PROSITE" id="PS00939">
    <property type="entry name" value="RIBOSOMAL_L1E"/>
    <property type="match status" value="1"/>
</dbReference>
<sequence length="252" mass="27340">MKVKVYNMDGSEKGETELSAVFETEYRPDLIKRAFLSSFTARLQPKGVDLMAGKRTSAKSIGKGHGRARVQRTGQGAGAFVPQAVGGRRCHPPKVEKILHERVNKKERLKALASAIAASANIEMVKNRGHVVETVPSVPLIVSDDFESLKKTKEVLETFKNLGLDGDVQRAKDGIKIRSGIGKLRGRKYRKPKSVLVVVSGACDAVKASKNLPGVDVISANDLGVMHIAPGADSGRLTLWTESAVEEINKRF</sequence>
<gene>
    <name evidence="1" type="primary">rpl4</name>
    <name type="ordered locus">Maeo_0806</name>
</gene>
<reference key="1">
    <citation type="submission" date="2007-06" db="EMBL/GenBank/DDBJ databases">
        <title>Complete sequence of Methanococcus aeolicus Nankai-3.</title>
        <authorList>
            <consortium name="US DOE Joint Genome Institute"/>
            <person name="Copeland A."/>
            <person name="Lucas S."/>
            <person name="Lapidus A."/>
            <person name="Barry K."/>
            <person name="Glavina del Rio T."/>
            <person name="Dalin E."/>
            <person name="Tice H."/>
            <person name="Pitluck S."/>
            <person name="Chain P."/>
            <person name="Malfatti S."/>
            <person name="Shin M."/>
            <person name="Vergez L."/>
            <person name="Schmutz J."/>
            <person name="Larimer F."/>
            <person name="Land M."/>
            <person name="Hauser L."/>
            <person name="Kyrpides N."/>
            <person name="Lykidis A."/>
            <person name="Sieprawska-Lupa M."/>
            <person name="Whitman W.B."/>
            <person name="Richardson P."/>
        </authorList>
    </citation>
    <scope>NUCLEOTIDE SEQUENCE [LARGE SCALE GENOMIC DNA]</scope>
    <source>
        <strain>ATCC BAA-1280 / DSM 17508 / OCM 812 / Nankai-3</strain>
    </source>
</reference>
<organism>
    <name type="scientific">Methanococcus aeolicus (strain ATCC BAA-1280 / DSM 17508 / OCM 812 / Nankai-3)</name>
    <dbReference type="NCBI Taxonomy" id="419665"/>
    <lineage>
        <taxon>Archaea</taxon>
        <taxon>Methanobacteriati</taxon>
        <taxon>Methanobacteriota</taxon>
        <taxon>Methanomada group</taxon>
        <taxon>Methanococci</taxon>
        <taxon>Methanococcales</taxon>
        <taxon>Methanococcaceae</taxon>
        <taxon>Methanococcus</taxon>
    </lineage>
</organism>
<accession>A6UV67</accession>